<keyword id="KW-0007">Acetylation</keyword>
<keyword id="KW-0175">Coiled coil</keyword>
<keyword id="KW-0963">Cytoplasm</keyword>
<keyword id="KW-0597">Phosphoprotein</keyword>
<keyword id="KW-1185">Reference proteome</keyword>
<keyword id="KW-0728">SH3 domain</keyword>
<protein>
    <recommendedName>
        <fullName>Endophilin-B2</fullName>
    </recommendedName>
    <alternativeName>
        <fullName>SH3 domain-containing GRB2-like protein B2</fullName>
    </alternativeName>
</protein>
<dbReference type="EMBL" id="BC123698">
    <property type="protein sequence ID" value="AAI23699.1"/>
    <property type="molecule type" value="mRNA"/>
</dbReference>
<dbReference type="RefSeq" id="NP_001070270.1">
    <property type="nucleotide sequence ID" value="NM_001076802.1"/>
</dbReference>
<dbReference type="SMR" id="Q08DK5"/>
<dbReference type="FunCoup" id="Q08DK5">
    <property type="interactions" value="1540"/>
</dbReference>
<dbReference type="STRING" id="9913.ENSBTAP00000059438"/>
<dbReference type="PaxDb" id="9913-ENSBTAP00000014049"/>
<dbReference type="GeneID" id="504750"/>
<dbReference type="KEGG" id="bta:504750"/>
<dbReference type="CTD" id="56904"/>
<dbReference type="eggNOG" id="KOG3725">
    <property type="taxonomic scope" value="Eukaryota"/>
</dbReference>
<dbReference type="HOGENOM" id="CLU_043817_1_1_1"/>
<dbReference type="InParanoid" id="Q08DK5"/>
<dbReference type="OrthoDB" id="14167at2759"/>
<dbReference type="TreeFam" id="TF313281"/>
<dbReference type="Proteomes" id="UP000009136">
    <property type="component" value="Unplaced"/>
</dbReference>
<dbReference type="GO" id="GO:0005737">
    <property type="term" value="C:cytoplasm"/>
    <property type="evidence" value="ECO:0007669"/>
    <property type="project" value="UniProtKB-SubCell"/>
</dbReference>
<dbReference type="GO" id="GO:0016020">
    <property type="term" value="C:membrane"/>
    <property type="evidence" value="ECO:0000318"/>
    <property type="project" value="GO_Central"/>
</dbReference>
<dbReference type="GO" id="GO:0061024">
    <property type="term" value="P:membrane organization"/>
    <property type="evidence" value="ECO:0000318"/>
    <property type="project" value="GO_Central"/>
</dbReference>
<dbReference type="CDD" id="cd07617">
    <property type="entry name" value="BAR_Endophilin_B2"/>
    <property type="match status" value="1"/>
</dbReference>
<dbReference type="CDD" id="cd11944">
    <property type="entry name" value="SH3_Endophilin_B2"/>
    <property type="match status" value="1"/>
</dbReference>
<dbReference type="FunFam" id="1.20.1270.60:FF:000017">
    <property type="entry name" value="endophilin-B2 isoform X1"/>
    <property type="match status" value="1"/>
</dbReference>
<dbReference type="FunFam" id="2.30.30.40:FF:000028">
    <property type="entry name" value="endophilin-B2 isoform X1"/>
    <property type="match status" value="1"/>
</dbReference>
<dbReference type="Gene3D" id="1.20.1270.60">
    <property type="entry name" value="Arfaptin homology (AH) domain/BAR domain"/>
    <property type="match status" value="1"/>
</dbReference>
<dbReference type="Gene3D" id="2.30.30.40">
    <property type="entry name" value="SH3 Domains"/>
    <property type="match status" value="1"/>
</dbReference>
<dbReference type="InterPro" id="IPR027267">
    <property type="entry name" value="AH/BAR_dom_sf"/>
</dbReference>
<dbReference type="InterPro" id="IPR004148">
    <property type="entry name" value="BAR_dom"/>
</dbReference>
<dbReference type="InterPro" id="IPR035640">
    <property type="entry name" value="Endophilin_B2_SH3"/>
</dbReference>
<dbReference type="InterPro" id="IPR050384">
    <property type="entry name" value="Endophilin_SH3RF"/>
</dbReference>
<dbReference type="InterPro" id="IPR036028">
    <property type="entry name" value="SH3-like_dom_sf"/>
</dbReference>
<dbReference type="InterPro" id="IPR001452">
    <property type="entry name" value="SH3_domain"/>
</dbReference>
<dbReference type="PANTHER" id="PTHR14167:SF68">
    <property type="entry name" value="DREBRIN-LIKE PROTEIN-RELATED"/>
    <property type="match status" value="1"/>
</dbReference>
<dbReference type="PANTHER" id="PTHR14167">
    <property type="entry name" value="SH3 DOMAIN-CONTAINING"/>
    <property type="match status" value="1"/>
</dbReference>
<dbReference type="Pfam" id="PF03114">
    <property type="entry name" value="BAR"/>
    <property type="match status" value="1"/>
</dbReference>
<dbReference type="Pfam" id="PF14604">
    <property type="entry name" value="SH3_9"/>
    <property type="match status" value="1"/>
</dbReference>
<dbReference type="SMART" id="SM00721">
    <property type="entry name" value="BAR"/>
    <property type="match status" value="1"/>
</dbReference>
<dbReference type="SMART" id="SM00326">
    <property type="entry name" value="SH3"/>
    <property type="match status" value="1"/>
</dbReference>
<dbReference type="SUPFAM" id="SSF103657">
    <property type="entry name" value="BAR/IMD domain-like"/>
    <property type="match status" value="1"/>
</dbReference>
<dbReference type="SUPFAM" id="SSF50044">
    <property type="entry name" value="SH3-domain"/>
    <property type="match status" value="1"/>
</dbReference>
<dbReference type="PROSITE" id="PS51021">
    <property type="entry name" value="BAR"/>
    <property type="match status" value="1"/>
</dbReference>
<dbReference type="PROSITE" id="PS50002">
    <property type="entry name" value="SH3"/>
    <property type="match status" value="1"/>
</dbReference>
<gene>
    <name type="primary">SH3GLB2</name>
</gene>
<sequence length="395" mass="44051">MDFNMKKLASDAGIFFTRAVQFTEEKFGQAEKTELDAHFESLLARADSTKNWTEKILRQTEVLLQPNPSARVEEFLYEKLDRKVPSRVTNGELLAQYMAEAASELGPTTPYGKTLIKVAEAEKHLGAAERDFIHTASINFLTPLRNFLEGDWKTISKERRLLQNRRLDLDASKARLKKAKAAEAKATTVPDFQETRPRNYILSASASALWNDEVDKAEQELRVAQTEFDRQAEVTRLLLEGISSTHVNHLRCLHEFIESQTTYYAQCYRHMLDLQKQLGRFPGTFVGTAEPASPPLSSTSPTTTAATMPMGPSVADLAPPGEAALRLEEVAPPASGTRKARVLYDYEAADSSELALLADELITVYSLPGMDPDWLIGERGNKKGKVPVTYLELLS</sequence>
<comment type="subunit">
    <text evidence="1">Homodimer, and heterodimer with SH3GLB1.</text>
</comment>
<comment type="subcellular location">
    <subcellularLocation>
        <location evidence="1">Cytoplasm</location>
    </subcellularLocation>
</comment>
<comment type="similarity">
    <text evidence="7">Belongs to the endophilin family.</text>
</comment>
<organism>
    <name type="scientific">Bos taurus</name>
    <name type="common">Bovine</name>
    <dbReference type="NCBI Taxonomy" id="9913"/>
    <lineage>
        <taxon>Eukaryota</taxon>
        <taxon>Metazoa</taxon>
        <taxon>Chordata</taxon>
        <taxon>Craniata</taxon>
        <taxon>Vertebrata</taxon>
        <taxon>Euteleostomi</taxon>
        <taxon>Mammalia</taxon>
        <taxon>Eutheria</taxon>
        <taxon>Laurasiatheria</taxon>
        <taxon>Artiodactyla</taxon>
        <taxon>Ruminantia</taxon>
        <taxon>Pecora</taxon>
        <taxon>Bovidae</taxon>
        <taxon>Bovinae</taxon>
        <taxon>Bos</taxon>
    </lineage>
</organism>
<proteinExistence type="evidence at transcript level"/>
<name>SHLB2_BOVIN</name>
<accession>Q08DK5</accession>
<feature type="chain" id="PRO_0000285843" description="Endophilin-B2">
    <location>
        <begin position="1"/>
        <end position="395"/>
    </location>
</feature>
<feature type="domain" description="BAR" evidence="6">
    <location>
        <begin position="24"/>
        <end position="287"/>
    </location>
</feature>
<feature type="domain" description="SH3" evidence="5">
    <location>
        <begin position="335"/>
        <end position="395"/>
    </location>
</feature>
<feature type="region of interest" description="Membrane-binding amphipathic helix" evidence="1">
    <location>
        <begin position="1"/>
        <end position="27"/>
    </location>
</feature>
<feature type="coiled-coil region" evidence="4">
    <location>
        <begin position="116"/>
        <end position="132"/>
    </location>
</feature>
<feature type="coiled-coil region" evidence="4">
    <location>
        <begin position="206"/>
        <end position="240"/>
    </location>
</feature>
<feature type="modified residue" description="N-acetylmethionine" evidence="3">
    <location>
        <position position="1"/>
    </location>
</feature>
<feature type="modified residue" description="Phosphoserine" evidence="3">
    <location>
        <position position="10"/>
    </location>
</feature>
<feature type="modified residue" description="Phosphoserine" evidence="2">
    <location>
        <position position="395"/>
    </location>
</feature>
<evidence type="ECO:0000250" key="1"/>
<evidence type="ECO:0000250" key="2">
    <source>
        <dbReference type="UniProtKB" id="Q5PPJ9"/>
    </source>
</evidence>
<evidence type="ECO:0000250" key="3">
    <source>
        <dbReference type="UniProtKB" id="Q9NR46"/>
    </source>
</evidence>
<evidence type="ECO:0000255" key="4"/>
<evidence type="ECO:0000255" key="5">
    <source>
        <dbReference type="PROSITE-ProRule" id="PRU00192"/>
    </source>
</evidence>
<evidence type="ECO:0000255" key="6">
    <source>
        <dbReference type="PROSITE-ProRule" id="PRU00361"/>
    </source>
</evidence>
<evidence type="ECO:0000305" key="7"/>
<reference key="1">
    <citation type="submission" date="2006-09" db="EMBL/GenBank/DDBJ databases">
        <authorList>
            <consortium name="NIH - Mammalian Gene Collection (MGC) project"/>
        </authorList>
    </citation>
    <scope>NUCLEOTIDE SEQUENCE [LARGE SCALE MRNA]</scope>
    <source>
        <strain>Hereford</strain>
        <tissue>Hippocampus</tissue>
    </source>
</reference>